<evidence type="ECO:0000255" key="1">
    <source>
        <dbReference type="HAMAP-Rule" id="MF_01214"/>
    </source>
</evidence>
<keyword id="KW-0238">DNA-binding</keyword>
<keyword id="KW-0804">Transcription</keyword>
<keyword id="KW-0805">Transcription regulation</keyword>
<name>GFCR_METM5</name>
<reference key="1">
    <citation type="submission" date="2007-03" db="EMBL/GenBank/DDBJ databases">
        <title>Complete sequence of chromosome of Methanococcus maripaludis C5.</title>
        <authorList>
            <consortium name="US DOE Joint Genome Institute"/>
            <person name="Copeland A."/>
            <person name="Lucas S."/>
            <person name="Lapidus A."/>
            <person name="Barry K."/>
            <person name="Glavina del Rio T."/>
            <person name="Dalin E."/>
            <person name="Tice H."/>
            <person name="Pitluck S."/>
            <person name="Chertkov O."/>
            <person name="Brettin T."/>
            <person name="Bruce D."/>
            <person name="Han C."/>
            <person name="Detter J.C."/>
            <person name="Schmutz J."/>
            <person name="Larimer F."/>
            <person name="Land M."/>
            <person name="Hauser L."/>
            <person name="Kyrpides N."/>
            <person name="Mikhailova N."/>
            <person name="Sieprawska-Lupa M."/>
            <person name="Whitman W.B."/>
            <person name="Richardson P."/>
        </authorList>
    </citation>
    <scope>NUCLEOTIDE SEQUENCE [LARGE SCALE GENOMIC DNA]</scope>
    <source>
        <strain>C5 / ATCC BAA-1333</strain>
    </source>
</reference>
<dbReference type="EMBL" id="CP000609">
    <property type="protein sequence ID" value="ABO35896.1"/>
    <property type="molecule type" value="Genomic_DNA"/>
</dbReference>
<dbReference type="RefSeq" id="WP_011869343.1">
    <property type="nucleotide sequence ID" value="NC_009135.1"/>
</dbReference>
<dbReference type="SMR" id="A4G0B2"/>
<dbReference type="STRING" id="402880.MmarC5_1599"/>
<dbReference type="GeneID" id="4928307"/>
<dbReference type="KEGG" id="mmq:MmarC5_1599"/>
<dbReference type="eggNOG" id="arCOG00028">
    <property type="taxonomic scope" value="Archaea"/>
</dbReference>
<dbReference type="HOGENOM" id="CLU_111001_0_0_2"/>
<dbReference type="OrthoDB" id="68893at2157"/>
<dbReference type="Proteomes" id="UP000000253">
    <property type="component" value="Chromosome"/>
</dbReference>
<dbReference type="GO" id="GO:0003677">
    <property type="term" value="F:DNA binding"/>
    <property type="evidence" value="ECO:0007669"/>
    <property type="project" value="UniProtKB-UniRule"/>
</dbReference>
<dbReference type="GO" id="GO:0004588">
    <property type="term" value="F:orotate phosphoribosyltransferase activity"/>
    <property type="evidence" value="ECO:0007669"/>
    <property type="project" value="TreeGrafter"/>
</dbReference>
<dbReference type="GO" id="GO:0019856">
    <property type="term" value="P:pyrimidine nucleobase biosynthetic process"/>
    <property type="evidence" value="ECO:0007669"/>
    <property type="project" value="TreeGrafter"/>
</dbReference>
<dbReference type="GO" id="GO:0010468">
    <property type="term" value="P:regulation of gene expression"/>
    <property type="evidence" value="ECO:0007669"/>
    <property type="project" value="UniProtKB-UniRule"/>
</dbReference>
<dbReference type="GO" id="GO:0006222">
    <property type="term" value="P:UMP biosynthetic process"/>
    <property type="evidence" value="ECO:0007669"/>
    <property type="project" value="TreeGrafter"/>
</dbReference>
<dbReference type="CDD" id="cd06223">
    <property type="entry name" value="PRTases_typeI"/>
    <property type="match status" value="1"/>
</dbReference>
<dbReference type="Gene3D" id="3.40.50.2020">
    <property type="match status" value="1"/>
</dbReference>
<dbReference type="HAMAP" id="MF_01214">
    <property type="entry name" value="GfcR"/>
    <property type="match status" value="1"/>
</dbReference>
<dbReference type="InterPro" id="IPR022854">
    <property type="entry name" value="GfcR-like"/>
</dbReference>
<dbReference type="InterPro" id="IPR000836">
    <property type="entry name" value="PRibTrfase_dom"/>
</dbReference>
<dbReference type="InterPro" id="IPR029057">
    <property type="entry name" value="PRTase-like"/>
</dbReference>
<dbReference type="NCBIfam" id="NF002620">
    <property type="entry name" value="PRK02277.1"/>
    <property type="match status" value="1"/>
</dbReference>
<dbReference type="PANTHER" id="PTHR19278">
    <property type="entry name" value="OROTATE PHOSPHORIBOSYLTRANSFERASE"/>
    <property type="match status" value="1"/>
</dbReference>
<dbReference type="PANTHER" id="PTHR19278:SF41">
    <property type="entry name" value="PYRE-LIKE PROTEIN"/>
    <property type="match status" value="1"/>
</dbReference>
<dbReference type="Pfam" id="PF00156">
    <property type="entry name" value="Pribosyltran"/>
    <property type="match status" value="1"/>
</dbReference>
<dbReference type="SUPFAM" id="SSF53271">
    <property type="entry name" value="PRTase-like"/>
    <property type="match status" value="1"/>
</dbReference>
<dbReference type="PROSITE" id="PS00103">
    <property type="entry name" value="PUR_PYR_PR_TRANSFER"/>
    <property type="match status" value="1"/>
</dbReference>
<accession>A4G0B2</accession>
<proteinExistence type="inferred from homology"/>
<protein>
    <recommendedName>
        <fullName evidence="1">Transcriptional regulator GfcR</fullName>
    </recommendedName>
</protein>
<gene>
    <name evidence="1" type="primary">gfcR</name>
    <name type="ordered locus">MmarC5_1599</name>
</gene>
<feature type="chain" id="PRO_1000066449" description="Transcriptional regulator GfcR">
    <location>
        <begin position="1"/>
        <end position="205"/>
    </location>
</feature>
<organism>
    <name type="scientific">Methanococcus maripaludis (strain C5 / ATCC BAA-1333)</name>
    <dbReference type="NCBI Taxonomy" id="402880"/>
    <lineage>
        <taxon>Archaea</taxon>
        <taxon>Methanobacteriati</taxon>
        <taxon>Methanobacteriota</taxon>
        <taxon>Methanomada group</taxon>
        <taxon>Methanococci</taxon>
        <taxon>Methanococcales</taxon>
        <taxon>Methanococcaceae</taxon>
        <taxon>Methanococcus</taxon>
    </lineage>
</organism>
<comment type="domain">
    <text evidence="1">Contains an N-terminal DNA-binding winged helix-turn-helix domain and a C-terminal regulatory domain (or effector binding domain) resembling phosphoribosyltransferase (PRT) domain.</text>
</comment>
<comment type="similarity">
    <text evidence="1">Belongs to the purine/pyrimidine phosphoribosyltransferase family. GfcR subfamily.</text>
</comment>
<sequence length="205" mass="22713">MKKELILKALKLRDMGFPSGDIAEELNISVKTALYLTLNGEELLKAGETPKEDSEKLDIFLEWDNVRASSRRLRNISKIICDMLSDVEFDGIVGISSGGVPLATLISDELDKNFSIYVPKKHVHTEKEKTTGFIGQNMSSIVGKDVIIVDDVMTSGNSVKETIKYLKGIANPKKVFVVMDKSGIDEIDGVKIEHLFRTGVVDIKK</sequence>